<evidence type="ECO:0000255" key="1">
    <source>
        <dbReference type="HAMAP-Rule" id="MF_01262"/>
    </source>
</evidence>
<organism>
    <name type="scientific">Bordetella pertussis (strain Tohama I / ATCC BAA-589 / NCTC 13251)</name>
    <dbReference type="NCBI Taxonomy" id="257313"/>
    <lineage>
        <taxon>Bacteria</taxon>
        <taxon>Pseudomonadati</taxon>
        <taxon>Pseudomonadota</taxon>
        <taxon>Betaproteobacteria</taxon>
        <taxon>Burkholderiales</taxon>
        <taxon>Alcaligenaceae</taxon>
        <taxon>Bordetella</taxon>
    </lineage>
</organism>
<keyword id="KW-0067">ATP-binding</keyword>
<keyword id="KW-0460">Magnesium</keyword>
<keyword id="KW-0479">Metal-binding</keyword>
<keyword id="KW-0547">Nucleotide-binding</keyword>
<keyword id="KW-0548">Nucleotidyltransferase</keyword>
<keyword id="KW-1185">Reference proteome</keyword>
<keyword id="KW-0692">RNA repair</keyword>
<keyword id="KW-0694">RNA-binding</keyword>
<keyword id="KW-0808">Transferase</keyword>
<keyword id="KW-0819">tRNA processing</keyword>
<proteinExistence type="inferred from homology"/>
<comment type="function">
    <text evidence="1">Catalyzes the addition and repair of the essential 3'-terminal CCA sequence in tRNAs without using a nucleic acid template. Adds these three nucleotides in the order of C, C, and A to the tRNA nucleotide-73, using CTP and ATP as substrates and producing inorganic pyrophosphate. tRNA 3'-terminal CCA addition is required both for tRNA processing and repair. Also involved in tRNA surveillance by mediating tandem CCA addition to generate a CCACCA at the 3' terminus of unstable tRNAs. While stable tRNAs receive only 3'-terminal CCA, unstable tRNAs are marked with CCACCA and rapidly degraded.</text>
</comment>
<comment type="catalytic activity">
    <reaction evidence="1">
        <text>a tRNA precursor + 2 CTP + ATP = a tRNA with a 3' CCA end + 3 diphosphate</text>
        <dbReference type="Rhea" id="RHEA:14433"/>
        <dbReference type="Rhea" id="RHEA-COMP:10465"/>
        <dbReference type="Rhea" id="RHEA-COMP:10468"/>
        <dbReference type="ChEBI" id="CHEBI:30616"/>
        <dbReference type="ChEBI" id="CHEBI:33019"/>
        <dbReference type="ChEBI" id="CHEBI:37563"/>
        <dbReference type="ChEBI" id="CHEBI:74896"/>
        <dbReference type="ChEBI" id="CHEBI:83071"/>
        <dbReference type="EC" id="2.7.7.72"/>
    </reaction>
</comment>
<comment type="catalytic activity">
    <reaction evidence="1">
        <text>a tRNA with a 3' CCA end + 2 CTP + ATP = a tRNA with a 3' CCACCA end + 3 diphosphate</text>
        <dbReference type="Rhea" id="RHEA:76235"/>
        <dbReference type="Rhea" id="RHEA-COMP:10468"/>
        <dbReference type="Rhea" id="RHEA-COMP:18655"/>
        <dbReference type="ChEBI" id="CHEBI:30616"/>
        <dbReference type="ChEBI" id="CHEBI:33019"/>
        <dbReference type="ChEBI" id="CHEBI:37563"/>
        <dbReference type="ChEBI" id="CHEBI:83071"/>
        <dbReference type="ChEBI" id="CHEBI:195187"/>
    </reaction>
    <physiologicalReaction direction="left-to-right" evidence="1">
        <dbReference type="Rhea" id="RHEA:76236"/>
    </physiologicalReaction>
</comment>
<comment type="cofactor">
    <cofactor evidence="1">
        <name>Mg(2+)</name>
        <dbReference type="ChEBI" id="CHEBI:18420"/>
    </cofactor>
</comment>
<comment type="miscellaneous">
    <text evidence="1">A single active site specifically recognizes both ATP and CTP and is responsible for their addition.</text>
</comment>
<comment type="similarity">
    <text evidence="1">Belongs to the tRNA nucleotidyltransferase/poly(A) polymerase family. Bacterial CCA-adding enzyme type 2 subfamily.</text>
</comment>
<feature type="chain" id="PRO_0000139016" description="CCA-adding enzyme">
    <location>
        <begin position="1"/>
        <end position="364"/>
    </location>
</feature>
<feature type="binding site" evidence="1">
    <location>
        <position position="19"/>
    </location>
    <ligand>
        <name>ATP</name>
        <dbReference type="ChEBI" id="CHEBI:30616"/>
    </ligand>
</feature>
<feature type="binding site" evidence="1">
    <location>
        <position position="19"/>
    </location>
    <ligand>
        <name>CTP</name>
        <dbReference type="ChEBI" id="CHEBI:37563"/>
    </ligand>
</feature>
<feature type="binding site" evidence="1">
    <location>
        <position position="22"/>
    </location>
    <ligand>
        <name>ATP</name>
        <dbReference type="ChEBI" id="CHEBI:30616"/>
    </ligand>
</feature>
<feature type="binding site" evidence="1">
    <location>
        <position position="22"/>
    </location>
    <ligand>
        <name>CTP</name>
        <dbReference type="ChEBI" id="CHEBI:37563"/>
    </ligand>
</feature>
<feature type="binding site" evidence="1">
    <location>
        <position position="32"/>
    </location>
    <ligand>
        <name>Mg(2+)</name>
        <dbReference type="ChEBI" id="CHEBI:18420"/>
    </ligand>
</feature>
<feature type="binding site" evidence="1">
    <location>
        <position position="34"/>
    </location>
    <ligand>
        <name>Mg(2+)</name>
        <dbReference type="ChEBI" id="CHEBI:18420"/>
    </ligand>
</feature>
<feature type="binding site" evidence="1">
    <location>
        <position position="102"/>
    </location>
    <ligand>
        <name>ATP</name>
        <dbReference type="ChEBI" id="CHEBI:30616"/>
    </ligand>
</feature>
<feature type="binding site" evidence="1">
    <location>
        <position position="102"/>
    </location>
    <ligand>
        <name>CTP</name>
        <dbReference type="ChEBI" id="CHEBI:37563"/>
    </ligand>
</feature>
<feature type="binding site" evidence="1">
    <location>
        <position position="148"/>
    </location>
    <ligand>
        <name>ATP</name>
        <dbReference type="ChEBI" id="CHEBI:30616"/>
    </ligand>
</feature>
<feature type="binding site" evidence="1">
    <location>
        <position position="148"/>
    </location>
    <ligand>
        <name>CTP</name>
        <dbReference type="ChEBI" id="CHEBI:37563"/>
    </ligand>
</feature>
<feature type="binding site" evidence="1">
    <location>
        <position position="151"/>
    </location>
    <ligand>
        <name>ATP</name>
        <dbReference type="ChEBI" id="CHEBI:30616"/>
    </ligand>
</feature>
<feature type="binding site" evidence="1">
    <location>
        <position position="151"/>
    </location>
    <ligand>
        <name>CTP</name>
        <dbReference type="ChEBI" id="CHEBI:37563"/>
    </ligand>
</feature>
<protein>
    <recommendedName>
        <fullName evidence="1">CCA-adding enzyme</fullName>
        <ecNumber evidence="1">2.7.7.72</ecNumber>
    </recommendedName>
    <alternativeName>
        <fullName evidence="1">CCA tRNA nucleotidyltransferase</fullName>
    </alternativeName>
    <alternativeName>
        <fullName evidence="1">tRNA CCA-pyrophosphorylase</fullName>
    </alternativeName>
    <alternativeName>
        <fullName evidence="1">tRNA adenylyl-/cytidylyl- transferase</fullName>
    </alternativeName>
    <alternativeName>
        <fullName evidence="1">tRNA nucleotidyltransferase</fullName>
    </alternativeName>
    <alternativeName>
        <fullName evidence="1">tRNA-NT</fullName>
    </alternativeName>
</protein>
<gene>
    <name evidence="1" type="primary">cca</name>
    <name type="ordered locus">BP3059</name>
</gene>
<sequence length="364" mass="39427">MSRTDDPGVAGLRVYIVGGAVRDDLLGLPAGDRDWVVVGATPEDMARRGFIPVGGDFPVFLHPRTKEEYALARTERKSGRGYKGFTFYTGADVTLEQDLQRRDLTVNAIARTPQGELVDPLDGVADVRARVLRHVGEAFAEDPVRILRLGRFAARFGDFSIAPETMQLCRRMVEAGEADALVPERVWKEVSRGLMAQAPSRMLDVLARAGALARVMPELHDDTAVRAEIDRAAAAGLPLAGRYALLCRHTPERDALGRRLRAPVECMDQARLLPLAVDALAASATPAAQLDLIERCDALRKPERFDALLQAAAIVAPVDLSAWRARVQAVRAIDAGAIARQCAGDPARIKPALRQARLQALGGA</sequence>
<name>CCA_BORPE</name>
<reference key="1">
    <citation type="journal article" date="2003" name="Nat. Genet.">
        <title>Comparative analysis of the genome sequences of Bordetella pertussis, Bordetella parapertussis and Bordetella bronchiseptica.</title>
        <authorList>
            <person name="Parkhill J."/>
            <person name="Sebaihia M."/>
            <person name="Preston A."/>
            <person name="Murphy L.D."/>
            <person name="Thomson N.R."/>
            <person name="Harris D.E."/>
            <person name="Holden M.T.G."/>
            <person name="Churcher C.M."/>
            <person name="Bentley S.D."/>
            <person name="Mungall K.L."/>
            <person name="Cerdeno-Tarraga A.-M."/>
            <person name="Temple L."/>
            <person name="James K.D."/>
            <person name="Harris B."/>
            <person name="Quail M.A."/>
            <person name="Achtman M."/>
            <person name="Atkin R."/>
            <person name="Baker S."/>
            <person name="Basham D."/>
            <person name="Bason N."/>
            <person name="Cherevach I."/>
            <person name="Chillingworth T."/>
            <person name="Collins M."/>
            <person name="Cronin A."/>
            <person name="Davis P."/>
            <person name="Doggett J."/>
            <person name="Feltwell T."/>
            <person name="Goble A."/>
            <person name="Hamlin N."/>
            <person name="Hauser H."/>
            <person name="Holroyd S."/>
            <person name="Jagels K."/>
            <person name="Leather S."/>
            <person name="Moule S."/>
            <person name="Norberczak H."/>
            <person name="O'Neil S."/>
            <person name="Ormond D."/>
            <person name="Price C."/>
            <person name="Rabbinowitsch E."/>
            <person name="Rutter S."/>
            <person name="Sanders M."/>
            <person name="Saunders D."/>
            <person name="Seeger K."/>
            <person name="Sharp S."/>
            <person name="Simmonds M."/>
            <person name="Skelton J."/>
            <person name="Squares R."/>
            <person name="Squares S."/>
            <person name="Stevens K."/>
            <person name="Unwin L."/>
            <person name="Whitehead S."/>
            <person name="Barrell B.G."/>
            <person name="Maskell D.J."/>
        </authorList>
    </citation>
    <scope>NUCLEOTIDE SEQUENCE [LARGE SCALE GENOMIC DNA]</scope>
    <source>
        <strain>Tohama I / ATCC BAA-589 / NCTC 13251</strain>
    </source>
</reference>
<dbReference type="EC" id="2.7.7.72" evidence="1"/>
<dbReference type="EMBL" id="BX640420">
    <property type="protein sequence ID" value="CAE43328.1"/>
    <property type="molecule type" value="Genomic_DNA"/>
</dbReference>
<dbReference type="RefSeq" id="NP_881630.1">
    <property type="nucleotide sequence ID" value="NC_002929.2"/>
</dbReference>
<dbReference type="RefSeq" id="WP_010931274.1">
    <property type="nucleotide sequence ID" value="NZ_CP039022.1"/>
</dbReference>
<dbReference type="SMR" id="Q7U358"/>
<dbReference type="STRING" id="257313.BP3059"/>
<dbReference type="PaxDb" id="257313-BP3059"/>
<dbReference type="KEGG" id="bpe:BP3059"/>
<dbReference type="PATRIC" id="fig|257313.5.peg.3307"/>
<dbReference type="eggNOG" id="COG0617">
    <property type="taxonomic scope" value="Bacteria"/>
</dbReference>
<dbReference type="HOGENOM" id="CLU_015961_1_0_4"/>
<dbReference type="Proteomes" id="UP000002676">
    <property type="component" value="Chromosome"/>
</dbReference>
<dbReference type="GO" id="GO:0005524">
    <property type="term" value="F:ATP binding"/>
    <property type="evidence" value="ECO:0007669"/>
    <property type="project" value="UniProtKB-UniRule"/>
</dbReference>
<dbReference type="GO" id="GO:0004810">
    <property type="term" value="F:CCA tRNA nucleotidyltransferase activity"/>
    <property type="evidence" value="ECO:0007669"/>
    <property type="project" value="UniProtKB-UniRule"/>
</dbReference>
<dbReference type="GO" id="GO:0000287">
    <property type="term" value="F:magnesium ion binding"/>
    <property type="evidence" value="ECO:0007669"/>
    <property type="project" value="UniProtKB-UniRule"/>
</dbReference>
<dbReference type="GO" id="GO:0000049">
    <property type="term" value="F:tRNA binding"/>
    <property type="evidence" value="ECO:0007669"/>
    <property type="project" value="UniProtKB-UniRule"/>
</dbReference>
<dbReference type="GO" id="GO:0042245">
    <property type="term" value="P:RNA repair"/>
    <property type="evidence" value="ECO:0007669"/>
    <property type="project" value="UniProtKB-KW"/>
</dbReference>
<dbReference type="GO" id="GO:0001680">
    <property type="term" value="P:tRNA 3'-terminal CCA addition"/>
    <property type="evidence" value="ECO:0007669"/>
    <property type="project" value="UniProtKB-UniRule"/>
</dbReference>
<dbReference type="Gene3D" id="3.30.460.10">
    <property type="entry name" value="Beta Polymerase, domain 2"/>
    <property type="match status" value="1"/>
</dbReference>
<dbReference type="Gene3D" id="1.10.3090.10">
    <property type="entry name" value="cca-adding enzyme, domain 2"/>
    <property type="match status" value="1"/>
</dbReference>
<dbReference type="HAMAP" id="MF_01262">
    <property type="entry name" value="CCA_bact_type2"/>
    <property type="match status" value="1"/>
</dbReference>
<dbReference type="InterPro" id="IPR012006">
    <property type="entry name" value="CCA_bact"/>
</dbReference>
<dbReference type="InterPro" id="IPR043519">
    <property type="entry name" value="NT_sf"/>
</dbReference>
<dbReference type="InterPro" id="IPR002646">
    <property type="entry name" value="PolA_pol_head_dom"/>
</dbReference>
<dbReference type="InterPro" id="IPR032828">
    <property type="entry name" value="PolyA_RNA-bd"/>
</dbReference>
<dbReference type="InterPro" id="IPR050124">
    <property type="entry name" value="tRNA_CCA-adding_enzyme"/>
</dbReference>
<dbReference type="NCBIfam" id="NF009812">
    <property type="entry name" value="PRK13297.1"/>
    <property type="match status" value="1"/>
</dbReference>
<dbReference type="PANTHER" id="PTHR47545">
    <property type="entry name" value="MULTIFUNCTIONAL CCA PROTEIN"/>
    <property type="match status" value="1"/>
</dbReference>
<dbReference type="PANTHER" id="PTHR47545:SF1">
    <property type="entry name" value="MULTIFUNCTIONAL CCA PROTEIN"/>
    <property type="match status" value="1"/>
</dbReference>
<dbReference type="Pfam" id="PF01743">
    <property type="entry name" value="PolyA_pol"/>
    <property type="match status" value="1"/>
</dbReference>
<dbReference type="Pfam" id="PF12627">
    <property type="entry name" value="PolyA_pol_RNAbd"/>
    <property type="match status" value="1"/>
</dbReference>
<dbReference type="PIRSF" id="PIRSF000813">
    <property type="entry name" value="CCA_bact"/>
    <property type="match status" value="1"/>
</dbReference>
<dbReference type="SUPFAM" id="SSF81301">
    <property type="entry name" value="Nucleotidyltransferase"/>
    <property type="match status" value="1"/>
</dbReference>
<dbReference type="SUPFAM" id="SSF81891">
    <property type="entry name" value="Poly A polymerase C-terminal region-like"/>
    <property type="match status" value="1"/>
</dbReference>
<accession>Q7U358</accession>